<protein>
    <recommendedName>
        <fullName>Uncharacterized protein MJ1539</fullName>
    </recommendedName>
</protein>
<comment type="similarity">
    <text evidence="1">To A.fulgidus AF1885.</text>
</comment>
<accession>Q58934</accession>
<reference key="1">
    <citation type="journal article" date="1996" name="Science">
        <title>Complete genome sequence of the methanogenic archaeon, Methanococcus jannaschii.</title>
        <authorList>
            <person name="Bult C.J."/>
            <person name="White O."/>
            <person name="Olsen G.J."/>
            <person name="Zhou L."/>
            <person name="Fleischmann R.D."/>
            <person name="Sutton G.G."/>
            <person name="Blake J.A."/>
            <person name="FitzGerald L.M."/>
            <person name="Clayton R.A."/>
            <person name="Gocayne J.D."/>
            <person name="Kerlavage A.R."/>
            <person name="Dougherty B.A."/>
            <person name="Tomb J.-F."/>
            <person name="Adams M.D."/>
            <person name="Reich C.I."/>
            <person name="Overbeek R."/>
            <person name="Kirkness E.F."/>
            <person name="Weinstock K.G."/>
            <person name="Merrick J.M."/>
            <person name="Glodek A."/>
            <person name="Scott J.L."/>
            <person name="Geoghagen N.S.M."/>
            <person name="Weidman J.F."/>
            <person name="Fuhrmann J.L."/>
            <person name="Nguyen D."/>
            <person name="Utterback T.R."/>
            <person name="Kelley J.M."/>
            <person name="Peterson J.D."/>
            <person name="Sadow P.W."/>
            <person name="Hanna M.C."/>
            <person name="Cotton M.D."/>
            <person name="Roberts K.M."/>
            <person name="Hurst M.A."/>
            <person name="Kaine B.P."/>
            <person name="Borodovsky M."/>
            <person name="Klenk H.-P."/>
            <person name="Fraser C.M."/>
            <person name="Smith H.O."/>
            <person name="Woese C.R."/>
            <person name="Venter J.C."/>
        </authorList>
    </citation>
    <scope>NUCLEOTIDE SEQUENCE [LARGE SCALE GENOMIC DNA]</scope>
    <source>
        <strain>ATCC 43067 / DSM 2661 / JAL-1 / JCM 10045 / NBRC 100440</strain>
    </source>
</reference>
<gene>
    <name type="ordered locus">MJ1539</name>
</gene>
<name>Y1539_METJA</name>
<keyword id="KW-1185">Reference proteome</keyword>
<proteinExistence type="predicted"/>
<dbReference type="EMBL" id="L77117">
    <property type="protein sequence ID" value="AAB99568.1"/>
    <property type="molecule type" value="Genomic_DNA"/>
</dbReference>
<dbReference type="PIR" id="B64492">
    <property type="entry name" value="B64492"/>
</dbReference>
<dbReference type="SMR" id="Q58934"/>
<dbReference type="STRING" id="243232.MJ_1539"/>
<dbReference type="PaxDb" id="243232-MJ_1539"/>
<dbReference type="EnsemblBacteria" id="AAB99568">
    <property type="protein sequence ID" value="AAB99568"/>
    <property type="gene ID" value="MJ_1539"/>
</dbReference>
<dbReference type="KEGG" id="mja:MJ_1539"/>
<dbReference type="eggNOG" id="arCOG08297">
    <property type="taxonomic scope" value="Archaea"/>
</dbReference>
<dbReference type="HOGENOM" id="CLU_2230419_0_0_2"/>
<dbReference type="InParanoid" id="Q58934"/>
<dbReference type="Proteomes" id="UP000000805">
    <property type="component" value="Chromosome"/>
</dbReference>
<evidence type="ECO:0000305" key="1"/>
<organism>
    <name type="scientific">Methanocaldococcus jannaschii (strain ATCC 43067 / DSM 2661 / JAL-1 / JCM 10045 / NBRC 100440)</name>
    <name type="common">Methanococcus jannaschii</name>
    <dbReference type="NCBI Taxonomy" id="243232"/>
    <lineage>
        <taxon>Archaea</taxon>
        <taxon>Methanobacteriati</taxon>
        <taxon>Methanobacteriota</taxon>
        <taxon>Methanomada group</taxon>
        <taxon>Methanococci</taxon>
        <taxon>Methanococcales</taxon>
        <taxon>Methanocaldococcaceae</taxon>
        <taxon>Methanocaldococcus</taxon>
    </lineage>
</organism>
<sequence length="109" mass="12451">MGIDMSEEKEVKEIKVEIPKEIADKIEKITSFLNSLKDKKEMVSKEKIEEMLKLIDEVKDKLPKLNVDIEKLAKILEGSGSEVKIVFNKLTIDGEVGLKIIPLKKEKKE</sequence>
<feature type="chain" id="PRO_0000107397" description="Uncharacterized protein MJ1539">
    <location>
        <begin position="1"/>
        <end position="109"/>
    </location>
</feature>